<keyword id="KW-0030">Aminoacyl-tRNA synthetase</keyword>
<keyword id="KW-0067">ATP-binding</keyword>
<keyword id="KW-0963">Cytoplasm</keyword>
<keyword id="KW-0436">Ligase</keyword>
<keyword id="KW-0547">Nucleotide-binding</keyword>
<keyword id="KW-0648">Protein biosynthesis</keyword>
<sequence>MRTCYTGEVCRDHLGQTVTLYGWVNRRRDHGGVIFIDLRDRAGLAQIVFDPDNAAFATAERLRNEFCIRVTGLVRPRPEGTANPELASGEVEVLCKEVEILNASITPPFQLDDDNLSETTRLTHRVLDLRRPQMQRNLMLRYRVSIEVRKFLDQLGFIDIETPMLTKSTPEGARDYLVPSRVNAGHFFALPQSPQLFKQMLMVSGFDRYYQITKCFRDEDLRADRQPEFTQIDCETSFLNEVEIRQIFEDMIRHVFKTVQNVELPAPFPQMTWTEAMQRYGSDKPDLRVSLEFTDVTDVMRDVDFKVFAAAATAPGSRVVALRVPGGAELSRSEIDAYTQFVGIYGAKGLAYIKVNDASKGREGLQSPIVKNLHDAALAELLKRSGAQSGDIIFFGADRAKIVNDAIGALRVKIGHSEFGKKAGLASSDWKPLWVVDFPMFEYDEEDGRYTAAHHPFTSPKDGHEDFLESDPSKAFAKAYDMVLNGWEIGGGSVRIHREEVQSKVFRALKIGAEEAREKFGFLLDALQYGAPPHGGIAFGLDRIVTMMTGAESIRDVIAFPKTQRAQCLLTQAPSEVDEKQLRELHIRLRNVEVK</sequence>
<organism>
    <name type="scientific">Bordetella petrii (strain ATCC BAA-461 / DSM 12804 / CCUG 43448)</name>
    <dbReference type="NCBI Taxonomy" id="340100"/>
    <lineage>
        <taxon>Bacteria</taxon>
        <taxon>Pseudomonadati</taxon>
        <taxon>Pseudomonadota</taxon>
        <taxon>Betaproteobacteria</taxon>
        <taxon>Burkholderiales</taxon>
        <taxon>Alcaligenaceae</taxon>
        <taxon>Bordetella</taxon>
    </lineage>
</organism>
<gene>
    <name evidence="1" type="primary">aspS</name>
    <name type="ordered locus">Bpet4847</name>
</gene>
<protein>
    <recommendedName>
        <fullName evidence="1">Aspartate--tRNA(Asp/Asn) ligase</fullName>
        <ecNumber evidence="1">6.1.1.23</ecNumber>
    </recommendedName>
    <alternativeName>
        <fullName evidence="1">Aspartyl-tRNA synthetase</fullName>
        <shortName evidence="1">AspRS</shortName>
    </alternativeName>
    <alternativeName>
        <fullName evidence="1">Non-discriminating aspartyl-tRNA synthetase</fullName>
        <shortName evidence="1">ND-AspRS</shortName>
    </alternativeName>
</protein>
<dbReference type="EC" id="6.1.1.23" evidence="1"/>
<dbReference type="EMBL" id="AM902716">
    <property type="protein sequence ID" value="CAP45199.1"/>
    <property type="molecule type" value="Genomic_DNA"/>
</dbReference>
<dbReference type="SMR" id="A9IHE2"/>
<dbReference type="STRING" id="94624.Bpet4847"/>
<dbReference type="KEGG" id="bpt:Bpet4847"/>
<dbReference type="eggNOG" id="COG0173">
    <property type="taxonomic scope" value="Bacteria"/>
</dbReference>
<dbReference type="Proteomes" id="UP000001225">
    <property type="component" value="Chromosome"/>
</dbReference>
<dbReference type="GO" id="GO:0005737">
    <property type="term" value="C:cytoplasm"/>
    <property type="evidence" value="ECO:0007669"/>
    <property type="project" value="UniProtKB-SubCell"/>
</dbReference>
<dbReference type="GO" id="GO:0004815">
    <property type="term" value="F:aspartate-tRNA ligase activity"/>
    <property type="evidence" value="ECO:0007669"/>
    <property type="project" value="UniProtKB-UniRule"/>
</dbReference>
<dbReference type="GO" id="GO:0050560">
    <property type="term" value="F:aspartate-tRNA(Asn) ligase activity"/>
    <property type="evidence" value="ECO:0007669"/>
    <property type="project" value="UniProtKB-EC"/>
</dbReference>
<dbReference type="GO" id="GO:0005524">
    <property type="term" value="F:ATP binding"/>
    <property type="evidence" value="ECO:0007669"/>
    <property type="project" value="UniProtKB-UniRule"/>
</dbReference>
<dbReference type="GO" id="GO:0003676">
    <property type="term" value="F:nucleic acid binding"/>
    <property type="evidence" value="ECO:0007669"/>
    <property type="project" value="InterPro"/>
</dbReference>
<dbReference type="GO" id="GO:0006422">
    <property type="term" value="P:aspartyl-tRNA aminoacylation"/>
    <property type="evidence" value="ECO:0007669"/>
    <property type="project" value="UniProtKB-UniRule"/>
</dbReference>
<dbReference type="CDD" id="cd00777">
    <property type="entry name" value="AspRS_core"/>
    <property type="match status" value="1"/>
</dbReference>
<dbReference type="CDD" id="cd04317">
    <property type="entry name" value="EcAspRS_like_N"/>
    <property type="match status" value="1"/>
</dbReference>
<dbReference type="Gene3D" id="3.30.930.10">
    <property type="entry name" value="Bira Bifunctional Protein, Domain 2"/>
    <property type="match status" value="1"/>
</dbReference>
<dbReference type="Gene3D" id="3.30.1360.30">
    <property type="entry name" value="GAD-like domain"/>
    <property type="match status" value="1"/>
</dbReference>
<dbReference type="Gene3D" id="2.40.50.140">
    <property type="entry name" value="Nucleic acid-binding proteins"/>
    <property type="match status" value="1"/>
</dbReference>
<dbReference type="HAMAP" id="MF_00044">
    <property type="entry name" value="Asp_tRNA_synth_type1"/>
    <property type="match status" value="1"/>
</dbReference>
<dbReference type="InterPro" id="IPR004364">
    <property type="entry name" value="Aa-tRNA-synt_II"/>
</dbReference>
<dbReference type="InterPro" id="IPR006195">
    <property type="entry name" value="aa-tRNA-synth_II"/>
</dbReference>
<dbReference type="InterPro" id="IPR045864">
    <property type="entry name" value="aa-tRNA-synth_II/BPL/LPL"/>
</dbReference>
<dbReference type="InterPro" id="IPR004524">
    <property type="entry name" value="Asp-tRNA-ligase_1"/>
</dbReference>
<dbReference type="InterPro" id="IPR047089">
    <property type="entry name" value="Asp-tRNA-ligase_1_N"/>
</dbReference>
<dbReference type="InterPro" id="IPR002312">
    <property type="entry name" value="Asp/Asn-tRNA-synth_IIb"/>
</dbReference>
<dbReference type="InterPro" id="IPR047090">
    <property type="entry name" value="AspRS_core"/>
</dbReference>
<dbReference type="InterPro" id="IPR004115">
    <property type="entry name" value="GAD-like_sf"/>
</dbReference>
<dbReference type="InterPro" id="IPR029351">
    <property type="entry name" value="GAD_dom"/>
</dbReference>
<dbReference type="InterPro" id="IPR012340">
    <property type="entry name" value="NA-bd_OB-fold"/>
</dbReference>
<dbReference type="InterPro" id="IPR004365">
    <property type="entry name" value="NA-bd_OB_tRNA"/>
</dbReference>
<dbReference type="NCBIfam" id="TIGR00459">
    <property type="entry name" value="aspS_bact"/>
    <property type="match status" value="1"/>
</dbReference>
<dbReference type="NCBIfam" id="NF001750">
    <property type="entry name" value="PRK00476.1"/>
    <property type="match status" value="1"/>
</dbReference>
<dbReference type="PANTHER" id="PTHR22594:SF5">
    <property type="entry name" value="ASPARTATE--TRNA LIGASE, MITOCHONDRIAL"/>
    <property type="match status" value="1"/>
</dbReference>
<dbReference type="PANTHER" id="PTHR22594">
    <property type="entry name" value="ASPARTYL/LYSYL-TRNA SYNTHETASE"/>
    <property type="match status" value="1"/>
</dbReference>
<dbReference type="Pfam" id="PF02938">
    <property type="entry name" value="GAD"/>
    <property type="match status" value="1"/>
</dbReference>
<dbReference type="Pfam" id="PF00152">
    <property type="entry name" value="tRNA-synt_2"/>
    <property type="match status" value="1"/>
</dbReference>
<dbReference type="Pfam" id="PF01336">
    <property type="entry name" value="tRNA_anti-codon"/>
    <property type="match status" value="1"/>
</dbReference>
<dbReference type="PRINTS" id="PR01042">
    <property type="entry name" value="TRNASYNTHASP"/>
</dbReference>
<dbReference type="SUPFAM" id="SSF55681">
    <property type="entry name" value="Class II aaRS and biotin synthetases"/>
    <property type="match status" value="1"/>
</dbReference>
<dbReference type="SUPFAM" id="SSF55261">
    <property type="entry name" value="GAD domain-like"/>
    <property type="match status" value="1"/>
</dbReference>
<dbReference type="SUPFAM" id="SSF50249">
    <property type="entry name" value="Nucleic acid-binding proteins"/>
    <property type="match status" value="1"/>
</dbReference>
<dbReference type="PROSITE" id="PS50862">
    <property type="entry name" value="AA_TRNA_LIGASE_II"/>
    <property type="match status" value="1"/>
</dbReference>
<comment type="function">
    <text evidence="1">Aspartyl-tRNA synthetase with relaxed tRNA specificity since it is able to aspartylate not only its cognate tRNA(Asp) but also tRNA(Asn). Reaction proceeds in two steps: L-aspartate is first activated by ATP to form Asp-AMP and then transferred to the acceptor end of tRNA(Asp/Asn).</text>
</comment>
<comment type="catalytic activity">
    <reaction evidence="1">
        <text>tRNA(Asx) + L-aspartate + ATP = L-aspartyl-tRNA(Asx) + AMP + diphosphate</text>
        <dbReference type="Rhea" id="RHEA:18349"/>
        <dbReference type="Rhea" id="RHEA-COMP:9710"/>
        <dbReference type="Rhea" id="RHEA-COMP:9711"/>
        <dbReference type="ChEBI" id="CHEBI:29991"/>
        <dbReference type="ChEBI" id="CHEBI:30616"/>
        <dbReference type="ChEBI" id="CHEBI:33019"/>
        <dbReference type="ChEBI" id="CHEBI:78442"/>
        <dbReference type="ChEBI" id="CHEBI:78516"/>
        <dbReference type="ChEBI" id="CHEBI:456215"/>
        <dbReference type="EC" id="6.1.1.23"/>
    </reaction>
</comment>
<comment type="subunit">
    <text evidence="1">Homodimer.</text>
</comment>
<comment type="subcellular location">
    <subcellularLocation>
        <location evidence="1">Cytoplasm</location>
    </subcellularLocation>
</comment>
<comment type="similarity">
    <text evidence="1">Belongs to the class-II aminoacyl-tRNA synthetase family. Type 1 subfamily.</text>
</comment>
<reference key="1">
    <citation type="journal article" date="2008" name="BMC Genomics">
        <title>The missing link: Bordetella petrii is endowed with both the metabolic versatility of environmental bacteria and virulence traits of pathogenic Bordetellae.</title>
        <authorList>
            <person name="Gross R."/>
            <person name="Guzman C.A."/>
            <person name="Sebaihia M."/>
            <person name="Martin dos Santos V.A.P."/>
            <person name="Pieper D.H."/>
            <person name="Koebnik R."/>
            <person name="Lechner M."/>
            <person name="Bartels D."/>
            <person name="Buhrmester J."/>
            <person name="Choudhuri J.V."/>
            <person name="Ebensen T."/>
            <person name="Gaigalat L."/>
            <person name="Herrmann S."/>
            <person name="Khachane A.N."/>
            <person name="Larisch C."/>
            <person name="Link S."/>
            <person name="Linke B."/>
            <person name="Meyer F."/>
            <person name="Mormann S."/>
            <person name="Nakunst D."/>
            <person name="Rueckert C."/>
            <person name="Schneiker-Bekel S."/>
            <person name="Schulze K."/>
            <person name="Voerholter F.-J."/>
            <person name="Yevsa T."/>
            <person name="Engle J.T."/>
            <person name="Goldman W.E."/>
            <person name="Puehler A."/>
            <person name="Goebel U.B."/>
            <person name="Goesmann A."/>
            <person name="Bloecker H."/>
            <person name="Kaiser O."/>
            <person name="Martinez-Arias R."/>
        </authorList>
    </citation>
    <scope>NUCLEOTIDE SEQUENCE [LARGE SCALE GENOMIC DNA]</scope>
    <source>
        <strain>ATCC BAA-461 / DSM 12804 / CCUG 43448</strain>
    </source>
</reference>
<feature type="chain" id="PRO_1000090964" description="Aspartate--tRNA(Asp/Asn) ligase">
    <location>
        <begin position="1"/>
        <end position="595"/>
    </location>
</feature>
<feature type="region of interest" description="Aspartate" evidence="1">
    <location>
        <begin position="195"/>
        <end position="198"/>
    </location>
</feature>
<feature type="binding site" evidence="1">
    <location>
        <position position="171"/>
    </location>
    <ligand>
        <name>L-aspartate</name>
        <dbReference type="ChEBI" id="CHEBI:29991"/>
    </ligand>
</feature>
<feature type="binding site" evidence="1">
    <location>
        <begin position="217"/>
        <end position="219"/>
    </location>
    <ligand>
        <name>ATP</name>
        <dbReference type="ChEBI" id="CHEBI:30616"/>
    </ligand>
</feature>
<feature type="binding site" evidence="1">
    <location>
        <position position="217"/>
    </location>
    <ligand>
        <name>L-aspartate</name>
        <dbReference type="ChEBI" id="CHEBI:29991"/>
    </ligand>
</feature>
<feature type="binding site" evidence="1">
    <location>
        <position position="226"/>
    </location>
    <ligand>
        <name>ATP</name>
        <dbReference type="ChEBI" id="CHEBI:30616"/>
    </ligand>
</feature>
<feature type="binding site" evidence="1">
    <location>
        <position position="454"/>
    </location>
    <ligand>
        <name>L-aspartate</name>
        <dbReference type="ChEBI" id="CHEBI:29991"/>
    </ligand>
</feature>
<feature type="binding site" evidence="1">
    <location>
        <position position="488"/>
    </location>
    <ligand>
        <name>ATP</name>
        <dbReference type="ChEBI" id="CHEBI:30616"/>
    </ligand>
</feature>
<feature type="binding site" evidence="1">
    <location>
        <position position="495"/>
    </location>
    <ligand>
        <name>L-aspartate</name>
        <dbReference type="ChEBI" id="CHEBI:29991"/>
    </ligand>
</feature>
<feature type="binding site" evidence="1">
    <location>
        <begin position="540"/>
        <end position="543"/>
    </location>
    <ligand>
        <name>ATP</name>
        <dbReference type="ChEBI" id="CHEBI:30616"/>
    </ligand>
</feature>
<feature type="site" description="Important for tRNA non-discrimination" evidence="1">
    <location>
        <position position="30"/>
    </location>
</feature>
<feature type="site" description="Important for tRNA non-discrimination" evidence="1">
    <location>
        <position position="80"/>
    </location>
</feature>
<name>SYDND_BORPD</name>
<proteinExistence type="inferred from homology"/>
<evidence type="ECO:0000255" key="1">
    <source>
        <dbReference type="HAMAP-Rule" id="MF_00044"/>
    </source>
</evidence>
<accession>A9IHE2</accession>